<dbReference type="EMBL" id="FM204884">
    <property type="protein sequence ID" value="CAW98026.1"/>
    <property type="molecule type" value="Genomic_DNA"/>
</dbReference>
<dbReference type="SMR" id="C0MFR4"/>
<dbReference type="KEGG" id="seq:SZO_02590"/>
<dbReference type="eggNOG" id="COG0227">
    <property type="taxonomic scope" value="Bacteria"/>
</dbReference>
<dbReference type="HOGENOM" id="CLU_064548_7_1_9"/>
<dbReference type="Proteomes" id="UP000001368">
    <property type="component" value="Chromosome"/>
</dbReference>
<dbReference type="GO" id="GO:1990904">
    <property type="term" value="C:ribonucleoprotein complex"/>
    <property type="evidence" value="ECO:0007669"/>
    <property type="project" value="UniProtKB-KW"/>
</dbReference>
<dbReference type="GO" id="GO:0005840">
    <property type="term" value="C:ribosome"/>
    <property type="evidence" value="ECO:0007669"/>
    <property type="project" value="UniProtKB-KW"/>
</dbReference>
<dbReference type="GO" id="GO:0003735">
    <property type="term" value="F:structural constituent of ribosome"/>
    <property type="evidence" value="ECO:0007669"/>
    <property type="project" value="InterPro"/>
</dbReference>
<dbReference type="GO" id="GO:0006412">
    <property type="term" value="P:translation"/>
    <property type="evidence" value="ECO:0007669"/>
    <property type="project" value="UniProtKB-UniRule"/>
</dbReference>
<dbReference type="Gene3D" id="2.30.170.40">
    <property type="entry name" value="Ribosomal protein L28/L24"/>
    <property type="match status" value="1"/>
</dbReference>
<dbReference type="HAMAP" id="MF_00373">
    <property type="entry name" value="Ribosomal_bL28"/>
    <property type="match status" value="1"/>
</dbReference>
<dbReference type="InterPro" id="IPR050096">
    <property type="entry name" value="Bacterial_rp_bL28"/>
</dbReference>
<dbReference type="InterPro" id="IPR026569">
    <property type="entry name" value="Ribosomal_bL28"/>
</dbReference>
<dbReference type="InterPro" id="IPR034704">
    <property type="entry name" value="Ribosomal_bL28/bL31-like_sf"/>
</dbReference>
<dbReference type="InterPro" id="IPR001383">
    <property type="entry name" value="Ribosomal_bL28_bact-type"/>
</dbReference>
<dbReference type="InterPro" id="IPR037147">
    <property type="entry name" value="Ribosomal_bL28_sf"/>
</dbReference>
<dbReference type="NCBIfam" id="TIGR00009">
    <property type="entry name" value="L28"/>
    <property type="match status" value="1"/>
</dbReference>
<dbReference type="PANTHER" id="PTHR39080">
    <property type="entry name" value="50S RIBOSOMAL PROTEIN L28"/>
    <property type="match status" value="1"/>
</dbReference>
<dbReference type="PANTHER" id="PTHR39080:SF1">
    <property type="entry name" value="LARGE RIBOSOMAL SUBUNIT PROTEIN BL28A"/>
    <property type="match status" value="1"/>
</dbReference>
<dbReference type="Pfam" id="PF00830">
    <property type="entry name" value="Ribosomal_L28"/>
    <property type="match status" value="1"/>
</dbReference>
<dbReference type="SUPFAM" id="SSF143800">
    <property type="entry name" value="L28p-like"/>
    <property type="match status" value="1"/>
</dbReference>
<gene>
    <name evidence="1" type="primary">rpmB</name>
    <name type="ordered locus">SZO_02590</name>
</gene>
<feature type="chain" id="PRO_1000205611" description="Large ribosomal subunit protein bL28">
    <location>
        <begin position="1"/>
        <end position="62"/>
    </location>
</feature>
<sequence length="62" mass="6928">MAKVCYFTGRKTVSGNNRSHAMNQTKRTVKPNLQKVTILVDGKPKKVWASARALKSGKVERI</sequence>
<name>RL28_STRS7</name>
<reference key="1">
    <citation type="journal article" date="2009" name="PLoS Pathog.">
        <title>Genomic evidence for the evolution of Streptococcus equi: host restriction, increased virulence, and genetic exchange with human pathogens.</title>
        <authorList>
            <person name="Holden M.T.G."/>
            <person name="Heather Z."/>
            <person name="Paillot R."/>
            <person name="Steward K.F."/>
            <person name="Webb K."/>
            <person name="Ainslie F."/>
            <person name="Jourdan T."/>
            <person name="Bason N.C."/>
            <person name="Holroyd N.E."/>
            <person name="Mungall K."/>
            <person name="Quail M.A."/>
            <person name="Sanders M."/>
            <person name="Simmonds M."/>
            <person name="Willey D."/>
            <person name="Brooks K."/>
            <person name="Aanensen D.M."/>
            <person name="Spratt B.G."/>
            <person name="Jolley K.A."/>
            <person name="Maiden M.C.J."/>
            <person name="Kehoe M."/>
            <person name="Chanter N."/>
            <person name="Bentley S.D."/>
            <person name="Robinson C."/>
            <person name="Maskell D.J."/>
            <person name="Parkhill J."/>
            <person name="Waller A.S."/>
        </authorList>
    </citation>
    <scope>NUCLEOTIDE SEQUENCE [LARGE SCALE GENOMIC DNA]</scope>
    <source>
        <strain>H70</strain>
    </source>
</reference>
<keyword id="KW-0687">Ribonucleoprotein</keyword>
<keyword id="KW-0689">Ribosomal protein</keyword>
<proteinExistence type="inferred from homology"/>
<comment type="similarity">
    <text evidence="1">Belongs to the bacterial ribosomal protein bL28 family.</text>
</comment>
<organism>
    <name type="scientific">Streptococcus equi subsp. zooepidemicus (strain H70)</name>
    <dbReference type="NCBI Taxonomy" id="553483"/>
    <lineage>
        <taxon>Bacteria</taxon>
        <taxon>Bacillati</taxon>
        <taxon>Bacillota</taxon>
        <taxon>Bacilli</taxon>
        <taxon>Lactobacillales</taxon>
        <taxon>Streptococcaceae</taxon>
        <taxon>Streptococcus</taxon>
    </lineage>
</organism>
<protein>
    <recommendedName>
        <fullName evidence="1">Large ribosomal subunit protein bL28</fullName>
    </recommendedName>
    <alternativeName>
        <fullName evidence="2">50S ribosomal protein L28</fullName>
    </alternativeName>
</protein>
<evidence type="ECO:0000255" key="1">
    <source>
        <dbReference type="HAMAP-Rule" id="MF_00373"/>
    </source>
</evidence>
<evidence type="ECO:0000305" key="2"/>
<accession>C0MFR4</accession>